<organism>
    <name type="scientific">Mycolicibacterium vanbaalenii (strain DSM 7251 / JCM 13017 / BCRC 16820 / KCTC 9966 / NRRL B-24157 / PYR-1)</name>
    <name type="common">Mycobacterium vanbaalenii</name>
    <dbReference type="NCBI Taxonomy" id="350058"/>
    <lineage>
        <taxon>Bacteria</taxon>
        <taxon>Bacillati</taxon>
        <taxon>Actinomycetota</taxon>
        <taxon>Actinomycetes</taxon>
        <taxon>Mycobacteriales</taxon>
        <taxon>Mycobacteriaceae</taxon>
        <taxon>Mycolicibacterium</taxon>
    </lineage>
</organism>
<protein>
    <recommendedName>
        <fullName evidence="1">Phosphatidylserine decarboxylase proenzyme</fullName>
        <ecNumber evidence="1">4.1.1.65</ecNumber>
    </recommendedName>
    <component>
        <recommendedName>
            <fullName evidence="1">Phosphatidylserine decarboxylase alpha chain</fullName>
        </recommendedName>
    </component>
    <component>
        <recommendedName>
            <fullName evidence="1">Phosphatidylserine decarboxylase beta chain</fullName>
        </recommendedName>
    </component>
</protein>
<proteinExistence type="inferred from homology"/>
<dbReference type="EC" id="4.1.1.65" evidence="1"/>
<dbReference type="EMBL" id="CP000511">
    <property type="protein sequence ID" value="ABM11589.1"/>
    <property type="molecule type" value="Genomic_DNA"/>
</dbReference>
<dbReference type="RefSeq" id="WP_011778025.1">
    <property type="nucleotide sequence ID" value="NZ_JACKSD010000022.1"/>
</dbReference>
<dbReference type="SMR" id="A1T339"/>
<dbReference type="STRING" id="350058.Mvan_0751"/>
<dbReference type="KEGG" id="mva:Mvan_0751"/>
<dbReference type="eggNOG" id="COG0688">
    <property type="taxonomic scope" value="Bacteria"/>
</dbReference>
<dbReference type="HOGENOM" id="CLU_072492_0_0_11"/>
<dbReference type="UniPathway" id="UPA00558">
    <property type="reaction ID" value="UER00616"/>
</dbReference>
<dbReference type="Proteomes" id="UP000009159">
    <property type="component" value="Chromosome"/>
</dbReference>
<dbReference type="GO" id="GO:0005886">
    <property type="term" value="C:plasma membrane"/>
    <property type="evidence" value="ECO:0007669"/>
    <property type="project" value="UniProtKB-SubCell"/>
</dbReference>
<dbReference type="GO" id="GO:0004609">
    <property type="term" value="F:phosphatidylserine decarboxylase activity"/>
    <property type="evidence" value="ECO:0007669"/>
    <property type="project" value="UniProtKB-UniRule"/>
</dbReference>
<dbReference type="GO" id="GO:0006646">
    <property type="term" value="P:phosphatidylethanolamine biosynthetic process"/>
    <property type="evidence" value="ECO:0007669"/>
    <property type="project" value="UniProtKB-UniRule"/>
</dbReference>
<dbReference type="HAMAP" id="MF_00664">
    <property type="entry name" value="PS_decarb_PSD_A"/>
    <property type="match status" value="1"/>
</dbReference>
<dbReference type="InterPro" id="IPR003817">
    <property type="entry name" value="PS_Dcarbxylase"/>
</dbReference>
<dbReference type="InterPro" id="IPR033175">
    <property type="entry name" value="PSD-A"/>
</dbReference>
<dbReference type="NCBIfam" id="NF003679">
    <property type="entry name" value="PRK05305.1-3"/>
    <property type="match status" value="1"/>
</dbReference>
<dbReference type="PANTHER" id="PTHR35809">
    <property type="entry name" value="ARCHAETIDYLSERINE DECARBOXYLASE PROENZYME-RELATED"/>
    <property type="match status" value="1"/>
</dbReference>
<dbReference type="PANTHER" id="PTHR35809:SF1">
    <property type="entry name" value="ARCHAETIDYLSERINE DECARBOXYLASE PROENZYME-RELATED"/>
    <property type="match status" value="1"/>
</dbReference>
<dbReference type="Pfam" id="PF02666">
    <property type="entry name" value="PS_Dcarbxylase"/>
    <property type="match status" value="1"/>
</dbReference>
<keyword id="KW-1003">Cell membrane</keyword>
<keyword id="KW-0210">Decarboxylase</keyword>
<keyword id="KW-0444">Lipid biosynthesis</keyword>
<keyword id="KW-0443">Lipid metabolism</keyword>
<keyword id="KW-0456">Lyase</keyword>
<keyword id="KW-0472">Membrane</keyword>
<keyword id="KW-0594">Phospholipid biosynthesis</keyword>
<keyword id="KW-1208">Phospholipid metabolism</keyword>
<keyword id="KW-0670">Pyruvate</keyword>
<keyword id="KW-0865">Zymogen</keyword>
<gene>
    <name evidence="1" type="primary">psd</name>
    <name type="ordered locus">Mvan_0751</name>
</gene>
<accession>A1T339</accession>
<name>PSD_MYCVP</name>
<comment type="function">
    <text evidence="1">Catalyzes the formation of phosphatidylethanolamine (PtdEtn) from phosphatidylserine (PtdSer).</text>
</comment>
<comment type="catalytic activity">
    <reaction evidence="1">
        <text>a 1,2-diacyl-sn-glycero-3-phospho-L-serine + H(+) = a 1,2-diacyl-sn-glycero-3-phosphoethanolamine + CO2</text>
        <dbReference type="Rhea" id="RHEA:20828"/>
        <dbReference type="ChEBI" id="CHEBI:15378"/>
        <dbReference type="ChEBI" id="CHEBI:16526"/>
        <dbReference type="ChEBI" id="CHEBI:57262"/>
        <dbReference type="ChEBI" id="CHEBI:64612"/>
        <dbReference type="EC" id="4.1.1.65"/>
    </reaction>
</comment>
<comment type="cofactor">
    <cofactor evidence="1">
        <name>pyruvate</name>
        <dbReference type="ChEBI" id="CHEBI:15361"/>
    </cofactor>
    <text evidence="1">Binds 1 pyruvoyl group covalently per subunit.</text>
</comment>
<comment type="pathway">
    <text evidence="1">Phospholipid metabolism; phosphatidylethanolamine biosynthesis; phosphatidylethanolamine from CDP-diacylglycerol: step 2/2.</text>
</comment>
<comment type="subunit">
    <text evidence="1">Heterodimer of a large membrane-associated beta subunit and a small pyruvoyl-containing alpha subunit.</text>
</comment>
<comment type="subcellular location">
    <subcellularLocation>
        <location evidence="1">Cell membrane</location>
        <topology evidence="1">Peripheral membrane protein</topology>
    </subcellularLocation>
</comment>
<comment type="PTM">
    <text evidence="1">Is synthesized initially as an inactive proenzyme. Formation of the active enzyme involves a self-maturation process in which the active site pyruvoyl group is generated from an internal serine residue via an autocatalytic post-translational modification. Two non-identical subunits are generated from the proenzyme in this reaction, and the pyruvate is formed at the N-terminus of the alpha chain, which is derived from the carboxyl end of the proenzyme. The post-translation cleavage follows an unusual pathway, termed non-hydrolytic serinolysis, in which the side chain hydroxyl group of the serine supplies its oxygen atom to form the C-terminus of the beta chain, while the remainder of the serine residue undergoes an oxidative deamination to produce ammonia and the pyruvoyl prosthetic group on the alpha chain.</text>
</comment>
<comment type="similarity">
    <text evidence="1">Belongs to the phosphatidylserine decarboxylase family. PSD-A subfamily.</text>
</comment>
<sequence length="233" mass="24337">MARRPDLKTGPARLAALVRTSVPPMHPAGLPFVGASLAVALAGRKSRWLRNAGVASAAANAAFFRHPPRTPPTRPGVVVAPADGLICLIEEAVPPSELRLPATPLPRISIFLSLLDAHVQRAPLGGEVIAVEHRPGLFGSADLAAASADNERNSIVIRSPEGAEVIAVQIAGLLARRIVCDVEPGDTVGLGDTYGLIRYGSRLDTYLPAGSDILVDVGQRTLAGETVLAELPR</sequence>
<evidence type="ECO:0000255" key="1">
    <source>
        <dbReference type="HAMAP-Rule" id="MF_00664"/>
    </source>
</evidence>
<reference key="1">
    <citation type="submission" date="2006-12" db="EMBL/GenBank/DDBJ databases">
        <title>Complete sequence of Mycobacterium vanbaalenii PYR-1.</title>
        <authorList>
            <consortium name="US DOE Joint Genome Institute"/>
            <person name="Copeland A."/>
            <person name="Lucas S."/>
            <person name="Lapidus A."/>
            <person name="Barry K."/>
            <person name="Detter J.C."/>
            <person name="Glavina del Rio T."/>
            <person name="Hammon N."/>
            <person name="Israni S."/>
            <person name="Dalin E."/>
            <person name="Tice H."/>
            <person name="Pitluck S."/>
            <person name="Singan V."/>
            <person name="Schmutz J."/>
            <person name="Larimer F."/>
            <person name="Land M."/>
            <person name="Hauser L."/>
            <person name="Kyrpides N."/>
            <person name="Anderson I.J."/>
            <person name="Miller C."/>
            <person name="Richardson P."/>
        </authorList>
    </citation>
    <scope>NUCLEOTIDE SEQUENCE [LARGE SCALE GENOMIC DNA]</scope>
    <source>
        <strain>DSM 7251 / JCM 13017 / BCRC 16820 / KCTC 9966 / NRRL B-24157 / PYR-1</strain>
    </source>
</reference>
<feature type="chain" id="PRO_1000026664" description="Phosphatidylserine decarboxylase beta chain" evidence="1">
    <location>
        <begin position="1"/>
        <end position="200"/>
    </location>
</feature>
<feature type="chain" id="PRO_1000026665" description="Phosphatidylserine decarboxylase alpha chain" evidence="1">
    <location>
        <begin position="201"/>
        <end position="233"/>
    </location>
</feature>
<feature type="active site" description="Schiff-base intermediate with substrate; via pyruvic acid" evidence="1">
    <location>
        <position position="201"/>
    </location>
</feature>
<feature type="site" description="Cleavage (non-hydrolytic); by autocatalysis" evidence="1">
    <location>
        <begin position="200"/>
        <end position="201"/>
    </location>
</feature>
<feature type="modified residue" description="Pyruvic acid (Ser); by autocatalysis" evidence="1">
    <location>
        <position position="201"/>
    </location>
</feature>